<name>GH_ALHV1</name>
<comment type="function">
    <text evidence="1">The heterodimer glycoprotein H-glycoprotein L is required for the fusion of viral and plasma membranes leading to virus entry into the host cell. Following initial binding to host receptor, membrane fusion is mediated by the fusion machinery composed of gB and the heterodimer gH/gL. May also be involved in the fusion between the virion envelope and the outer nuclear membrane during virion morphogenesis.</text>
</comment>
<comment type="subunit">
    <text evidence="1">Interacts with glycoprotein L (gL); this interaction is necessary for the correct processing and cell surface expression of gH. The heterodimer gH/gL seems to interact with gB trimers during fusion.</text>
</comment>
<comment type="subcellular location">
    <subcellularLocation>
        <location evidence="1">Virion membrane</location>
        <topology evidence="1">Single-pass type I membrane protein</topology>
    </subcellularLocation>
    <subcellularLocation>
        <location evidence="1">Host cell membrane</location>
        <topology evidence="1">Single-pass type I membrane protein</topology>
    </subcellularLocation>
    <subcellularLocation>
        <location evidence="1">Host endosome membrane</location>
        <topology evidence="1">Single-pass type I membrane protein</topology>
    </subcellularLocation>
    <text evidence="1">During virion morphogenesis, this protein probably accumulates in the endosomes and trans-Golgi where secondary envelopment occurs. It is probably transported to the cell surface from where it is endocytosed and directed to the trans-Golgi network (TGN).</text>
</comment>
<comment type="PTM">
    <text evidence="1">N-glycosylated, O-glycosylated, and sialylated.</text>
</comment>
<comment type="similarity">
    <text evidence="1">Belongs to the herpesviridae glycoprotein H family.</text>
</comment>
<reference key="1">
    <citation type="journal article" date="1997" name="J. Virol.">
        <title>Primary structure of the alcelaphine herpesvirus 1 genome.</title>
        <authorList>
            <person name="Ensser A."/>
            <person name="Pflanz R."/>
            <person name="Fleckenstein B."/>
        </authorList>
    </citation>
    <scope>NUCLEOTIDE SEQUENCE [LARGE SCALE GENOMIC DNA]</scope>
</reference>
<organism>
    <name type="scientific">Alcelaphine herpesvirus 1 (strain C500)</name>
    <name type="common">AlHV-1</name>
    <name type="synonym">Malignant catarrhal fever virus</name>
    <dbReference type="NCBI Taxonomy" id="654901"/>
    <lineage>
        <taxon>Viruses</taxon>
        <taxon>Duplodnaviria</taxon>
        <taxon>Heunggongvirae</taxon>
        <taxon>Peploviricota</taxon>
        <taxon>Herviviricetes</taxon>
        <taxon>Herpesvirales</taxon>
        <taxon>Orthoherpesviridae</taxon>
        <taxon>Gammaherpesvirinae</taxon>
        <taxon>Macavirus</taxon>
        <taxon>Macavirus alcelaphinegamma1</taxon>
    </lineage>
</organism>
<keyword id="KW-1169">Fusion of virus membrane with host cell membrane</keyword>
<keyword id="KW-1168">Fusion of virus membrane with host membrane</keyword>
<keyword id="KW-0325">Glycoprotein</keyword>
<keyword id="KW-1032">Host cell membrane</keyword>
<keyword id="KW-1039">Host endosome</keyword>
<keyword id="KW-1043">Host membrane</keyword>
<keyword id="KW-0472">Membrane</keyword>
<keyword id="KW-1185">Reference proteome</keyword>
<keyword id="KW-0730">Sialic acid</keyword>
<keyword id="KW-0732">Signal</keyword>
<keyword id="KW-0812">Transmembrane</keyword>
<keyword id="KW-1133">Transmembrane helix</keyword>
<keyword id="KW-0261">Viral envelope protein</keyword>
<keyword id="KW-1162">Viral penetration into host cytoplasm</keyword>
<keyword id="KW-0946">Virion</keyword>
<keyword id="KW-1160">Virus entry into host cell</keyword>
<sequence>MLFLILLCVTGAQAITTPAPPRPATTTPRRGVTSAPLIVPASSSELIVTLDGTFHSVTIDMTEIRQYVRQEIIEALWNASHVFESLETTYNRYKDVYRFTDQSIRVNTRGKLSTCKEVNKSTEVSFYKSITSQTINGKYDGDLGISNHQLGQQLFFYVMNVFPVENAFYPVRKHVVYSSLSLADGAYQLAGMATTNYVSLVVVRKISSTVTHEATIVFGNKKLLPSMRGSITKYDISLVNSDAEELLLLTSQKDYEYFSKNLFPQNWTDVFSLITSHTVGELAQILQTSVVDFARKGRCRSVHFNSHFLTTYLAVLSLYYKMGTEFVSKNERQISLQCILPKLYEANVCFDMVHRCFTSQYTRGFDSDGINRLSAAILGSMPFEPNQGLSVPTNWFLQTLYFVDGNLDPQNKGLHGITLILMDIYGRYVVNFTLTPEDRETLFYVYNALRGRKHLSTTMKNKYVSLIYCYTTSMCSATELAWGIEYWGEESTHSAHHSFSPCFMSLRFDYTLEKLNIEGSQDVKLTQTQLSNGVSAMYSLLTAKSSTWTIDSLSIKPCIYNASFVKMIVPFTNVSYVISQGVAAPGTTYDVAETFLKSSMVITVVSNSECYNLTASKEILKIPVVYNMTHPRIKCQLCDSVVISYDEYDGLQTMVYISNYKVQQDLFSDYSIFFDFNNMHTHYLLLMNNGTLFEIRGLYANRAMNIIIILLFTIAALAGVFIVYKIVMYMTFK</sequence>
<dbReference type="EMBL" id="AF005370">
    <property type="protein sequence ID" value="AAC58069.1"/>
    <property type="molecule type" value="Genomic_DNA"/>
</dbReference>
<dbReference type="PIR" id="T03117">
    <property type="entry name" value="T03117"/>
</dbReference>
<dbReference type="RefSeq" id="NP_065521.1">
    <property type="nucleotide sequence ID" value="NC_002531.1"/>
</dbReference>
<dbReference type="SMR" id="O36372"/>
<dbReference type="GlyCosmos" id="O36372">
    <property type="glycosylation" value="9 sites, No reported glycans"/>
</dbReference>
<dbReference type="KEGG" id="vg:911757"/>
<dbReference type="Proteomes" id="UP000000941">
    <property type="component" value="Segment"/>
</dbReference>
<dbReference type="GO" id="GO:0044175">
    <property type="term" value="C:host cell endosome membrane"/>
    <property type="evidence" value="ECO:0007669"/>
    <property type="project" value="UniProtKB-SubCell"/>
</dbReference>
<dbReference type="GO" id="GO:0020002">
    <property type="term" value="C:host cell plasma membrane"/>
    <property type="evidence" value="ECO:0007669"/>
    <property type="project" value="UniProtKB-SubCell"/>
</dbReference>
<dbReference type="GO" id="GO:0016020">
    <property type="term" value="C:membrane"/>
    <property type="evidence" value="ECO:0007669"/>
    <property type="project" value="UniProtKB-KW"/>
</dbReference>
<dbReference type="GO" id="GO:0019031">
    <property type="term" value="C:viral envelope"/>
    <property type="evidence" value="ECO:0007669"/>
    <property type="project" value="UniProtKB-KW"/>
</dbReference>
<dbReference type="GO" id="GO:0055036">
    <property type="term" value="C:virion membrane"/>
    <property type="evidence" value="ECO:0007669"/>
    <property type="project" value="UniProtKB-SubCell"/>
</dbReference>
<dbReference type="GO" id="GO:0019064">
    <property type="term" value="P:fusion of virus membrane with host plasma membrane"/>
    <property type="evidence" value="ECO:0007669"/>
    <property type="project" value="UniProtKB-KW"/>
</dbReference>
<dbReference type="GO" id="GO:0046718">
    <property type="term" value="P:symbiont entry into host cell"/>
    <property type="evidence" value="ECO:0007669"/>
    <property type="project" value="UniProtKB-KW"/>
</dbReference>
<dbReference type="Gene3D" id="2.60.40.3190">
    <property type="entry name" value="Herpesvirus glycoprotein H, C-terminal domain"/>
    <property type="match status" value="1"/>
</dbReference>
<dbReference type="Gene3D" id="3.90.380.20">
    <property type="entry name" value="Herpesvirus glycoprotein H, domain D-II"/>
    <property type="match status" value="1"/>
</dbReference>
<dbReference type="HAMAP" id="MF_04033">
    <property type="entry name" value="HSV_GH"/>
    <property type="match status" value="1"/>
</dbReference>
<dbReference type="InterPro" id="IPR003493">
    <property type="entry name" value="Herpes_gH"/>
</dbReference>
<dbReference type="InterPro" id="IPR035305">
    <property type="entry name" value="Herpes_glycoH_C"/>
</dbReference>
<dbReference type="InterPro" id="IPR038172">
    <property type="entry name" value="Herpes_glycoH_C_sf"/>
</dbReference>
<dbReference type="Pfam" id="PF17488">
    <property type="entry name" value="Herpes_glycoH_C"/>
    <property type="match status" value="1"/>
</dbReference>
<dbReference type="Pfam" id="PF02489">
    <property type="entry name" value="Herpes_glycop_H"/>
    <property type="match status" value="1"/>
</dbReference>
<accession>O36372</accession>
<proteinExistence type="inferred from homology"/>
<evidence type="ECO:0000255" key="1">
    <source>
        <dbReference type="HAMAP-Rule" id="MF_04033"/>
    </source>
</evidence>
<feature type="signal peptide" evidence="1">
    <location>
        <begin position="1"/>
        <end position="14"/>
    </location>
</feature>
<feature type="chain" id="PRO_0000436646" description="Envelope glycoprotein H" evidence="1">
    <location>
        <begin position="15"/>
        <end position="733"/>
    </location>
</feature>
<feature type="topological domain" description="Virion surface" evidence="1">
    <location>
        <begin position="15"/>
        <end position="707"/>
    </location>
</feature>
<feature type="transmembrane region" description="Helical" evidence="1">
    <location>
        <begin position="708"/>
        <end position="728"/>
    </location>
</feature>
<feature type="topological domain" description="Intravirion" evidence="1">
    <location>
        <begin position="729"/>
        <end position="733"/>
    </location>
</feature>
<feature type="region of interest" description="Interaction with gL" evidence="1">
    <location>
        <begin position="185"/>
        <end position="249"/>
    </location>
</feature>
<feature type="glycosylation site" description="N-linked (GlcNAc...) asparagine; by host" evidence="1">
    <location>
        <position position="78"/>
    </location>
</feature>
<feature type="glycosylation site" description="N-linked (GlcNAc...) asparagine; by host" evidence="1">
    <location>
        <position position="119"/>
    </location>
</feature>
<feature type="glycosylation site" description="N-linked (GlcNAc...) asparagine; by host" evidence="1">
    <location>
        <position position="266"/>
    </location>
</feature>
<feature type="glycosylation site" description="N-linked (GlcNAc...) asparagine; by host" evidence="1">
    <location>
        <position position="431"/>
    </location>
</feature>
<feature type="glycosylation site" description="N-linked (GlcNAc...) asparagine; by host" evidence="1">
    <location>
        <position position="561"/>
    </location>
</feature>
<feature type="glycosylation site" description="N-linked (GlcNAc...) asparagine; by host" evidence="1">
    <location>
        <position position="573"/>
    </location>
</feature>
<feature type="glycosylation site" description="N-linked (GlcNAc...) asparagine; by host" evidence="1">
    <location>
        <position position="612"/>
    </location>
</feature>
<feature type="glycosylation site" description="N-linked (GlcNAc...) asparagine; by host" evidence="1">
    <location>
        <position position="627"/>
    </location>
</feature>
<feature type="glycosylation site" description="N-linked (GlcNAc...) asparagine; by host" evidence="1">
    <location>
        <position position="689"/>
    </location>
</feature>
<gene>
    <name evidence="1" type="primary">gH</name>
    <name type="synonym">22</name>
</gene>
<protein>
    <recommendedName>
        <fullName evidence="1">Envelope glycoprotein H</fullName>
        <shortName evidence="1">gH</shortName>
    </recommendedName>
</protein>
<organismHost>
    <name type="scientific">Connochaetes taurinus</name>
    <name type="common">Blue wildebeest</name>
    <dbReference type="NCBI Taxonomy" id="9927"/>
</organismHost>